<keyword id="KW-0067">ATP-binding</keyword>
<keyword id="KW-0460">Magnesium</keyword>
<keyword id="KW-0511">Multifunctional enzyme</keyword>
<keyword id="KW-0547">Nucleotide-binding</keyword>
<keyword id="KW-0548">Nucleotidyltransferase</keyword>
<keyword id="KW-1185">Reference proteome</keyword>
<keyword id="KW-0808">Transferase</keyword>
<name>GLNE_CITK8</name>
<evidence type="ECO:0000255" key="1">
    <source>
        <dbReference type="HAMAP-Rule" id="MF_00802"/>
    </source>
</evidence>
<comment type="function">
    <text evidence="1">Involved in the regulation of glutamine synthetase GlnA, a key enzyme in the process to assimilate ammonia. When cellular nitrogen levels are high, the C-terminal adenylyl transferase (AT) inactivates GlnA by covalent transfer of an adenylyl group from ATP to specific tyrosine residue of GlnA, thus reducing its activity. Conversely, when nitrogen levels are low, the N-terminal adenylyl removase (AR) activates GlnA by removing the adenylyl group by phosphorolysis, increasing its activity. The regulatory region of GlnE binds the signal transduction protein PII (GlnB) which indicates the nitrogen status of the cell.</text>
</comment>
<comment type="catalytic activity">
    <reaction evidence="1">
        <text>[glutamine synthetase]-O(4)-(5'-adenylyl)-L-tyrosine + phosphate = [glutamine synthetase]-L-tyrosine + ADP</text>
        <dbReference type="Rhea" id="RHEA:43716"/>
        <dbReference type="Rhea" id="RHEA-COMP:10660"/>
        <dbReference type="Rhea" id="RHEA-COMP:10661"/>
        <dbReference type="ChEBI" id="CHEBI:43474"/>
        <dbReference type="ChEBI" id="CHEBI:46858"/>
        <dbReference type="ChEBI" id="CHEBI:83624"/>
        <dbReference type="ChEBI" id="CHEBI:456216"/>
        <dbReference type="EC" id="2.7.7.89"/>
    </reaction>
</comment>
<comment type="catalytic activity">
    <reaction evidence="1">
        <text>[glutamine synthetase]-L-tyrosine + ATP = [glutamine synthetase]-O(4)-(5'-adenylyl)-L-tyrosine + diphosphate</text>
        <dbReference type="Rhea" id="RHEA:18589"/>
        <dbReference type="Rhea" id="RHEA-COMP:10660"/>
        <dbReference type="Rhea" id="RHEA-COMP:10661"/>
        <dbReference type="ChEBI" id="CHEBI:30616"/>
        <dbReference type="ChEBI" id="CHEBI:33019"/>
        <dbReference type="ChEBI" id="CHEBI:46858"/>
        <dbReference type="ChEBI" id="CHEBI:83624"/>
        <dbReference type="EC" id="2.7.7.42"/>
    </reaction>
</comment>
<comment type="cofactor">
    <cofactor evidence="1">
        <name>Mg(2+)</name>
        <dbReference type="ChEBI" id="CHEBI:18420"/>
    </cofactor>
</comment>
<comment type="similarity">
    <text evidence="1">Belongs to the GlnE family.</text>
</comment>
<organism>
    <name type="scientific">Citrobacter koseri (strain ATCC BAA-895 / CDC 4225-83 / SGSC4696)</name>
    <dbReference type="NCBI Taxonomy" id="290338"/>
    <lineage>
        <taxon>Bacteria</taxon>
        <taxon>Pseudomonadati</taxon>
        <taxon>Pseudomonadota</taxon>
        <taxon>Gammaproteobacteria</taxon>
        <taxon>Enterobacterales</taxon>
        <taxon>Enterobacteriaceae</taxon>
        <taxon>Citrobacter</taxon>
    </lineage>
</organism>
<accession>A8APT2</accession>
<protein>
    <recommendedName>
        <fullName evidence="1">Bifunctional glutamine synthetase adenylyltransferase/adenylyl-removing enzyme</fullName>
    </recommendedName>
    <alternativeName>
        <fullName evidence="1">ATP:glutamine synthetase adenylyltransferase</fullName>
    </alternativeName>
    <alternativeName>
        <fullName evidence="1">ATase</fullName>
    </alternativeName>
    <domain>
        <recommendedName>
            <fullName evidence="1">Glutamine synthetase adenylyl-L-tyrosine phosphorylase</fullName>
            <ecNumber evidence="1">2.7.7.89</ecNumber>
        </recommendedName>
        <alternativeName>
            <fullName evidence="1">Adenylyl removase</fullName>
            <shortName evidence="1">AR</shortName>
            <shortName evidence="1">AT-N</shortName>
        </alternativeName>
    </domain>
    <domain>
        <recommendedName>
            <fullName evidence="1">Glutamine synthetase adenylyl transferase</fullName>
            <ecNumber evidence="1">2.7.7.42</ecNumber>
        </recommendedName>
        <alternativeName>
            <fullName evidence="1">Adenylyl transferase</fullName>
            <shortName evidence="1">AT</shortName>
            <shortName evidence="1">AT-C</shortName>
        </alternativeName>
    </domain>
</protein>
<proteinExistence type="inferred from homology"/>
<feature type="chain" id="PRO_1000047011" description="Bifunctional glutamine synthetase adenylyltransferase/adenylyl-removing enzyme">
    <location>
        <begin position="1"/>
        <end position="946"/>
    </location>
</feature>
<feature type="region of interest" description="Adenylyl removase" evidence="1">
    <location>
        <begin position="1"/>
        <end position="440"/>
    </location>
</feature>
<feature type="region of interest" description="Adenylyl transferase" evidence="1">
    <location>
        <begin position="449"/>
        <end position="946"/>
    </location>
</feature>
<reference key="1">
    <citation type="submission" date="2007-08" db="EMBL/GenBank/DDBJ databases">
        <authorList>
            <consortium name="The Citrobacter koseri Genome Sequencing Project"/>
            <person name="McClelland M."/>
            <person name="Sanderson E.K."/>
            <person name="Porwollik S."/>
            <person name="Spieth J."/>
            <person name="Clifton W.S."/>
            <person name="Latreille P."/>
            <person name="Courtney L."/>
            <person name="Wang C."/>
            <person name="Pepin K."/>
            <person name="Bhonagiri V."/>
            <person name="Nash W."/>
            <person name="Johnson M."/>
            <person name="Thiruvilangam P."/>
            <person name="Wilson R."/>
        </authorList>
    </citation>
    <scope>NUCLEOTIDE SEQUENCE [LARGE SCALE GENOMIC DNA]</scope>
    <source>
        <strain>ATCC BAA-895 / CDC 4225-83 / SGSC4696</strain>
    </source>
</reference>
<dbReference type="EC" id="2.7.7.89" evidence="1"/>
<dbReference type="EC" id="2.7.7.42" evidence="1"/>
<dbReference type="EMBL" id="CP000822">
    <property type="protein sequence ID" value="ABV15495.1"/>
    <property type="molecule type" value="Genomic_DNA"/>
</dbReference>
<dbReference type="RefSeq" id="WP_012135178.1">
    <property type="nucleotide sequence ID" value="NC_009792.1"/>
</dbReference>
<dbReference type="SMR" id="A8APT2"/>
<dbReference type="STRING" id="290338.CKO_04439"/>
<dbReference type="GeneID" id="45138012"/>
<dbReference type="KEGG" id="cko:CKO_04439"/>
<dbReference type="HOGENOM" id="CLU_006233_0_1_6"/>
<dbReference type="OrthoDB" id="9759366at2"/>
<dbReference type="Proteomes" id="UP000008148">
    <property type="component" value="Chromosome"/>
</dbReference>
<dbReference type="GO" id="GO:0005829">
    <property type="term" value="C:cytosol"/>
    <property type="evidence" value="ECO:0007669"/>
    <property type="project" value="TreeGrafter"/>
</dbReference>
<dbReference type="GO" id="GO:0008882">
    <property type="term" value="F:[glutamate-ammonia-ligase] adenylyltransferase activity"/>
    <property type="evidence" value="ECO:0007669"/>
    <property type="project" value="UniProtKB-UniRule"/>
</dbReference>
<dbReference type="GO" id="GO:0047388">
    <property type="term" value="F:[glutamine synthetase]-adenylyl-L-tyrosine phosphorylase activity"/>
    <property type="evidence" value="ECO:0007669"/>
    <property type="project" value="UniProtKB-EC"/>
</dbReference>
<dbReference type="GO" id="GO:0005524">
    <property type="term" value="F:ATP binding"/>
    <property type="evidence" value="ECO:0007669"/>
    <property type="project" value="UniProtKB-UniRule"/>
</dbReference>
<dbReference type="GO" id="GO:0000287">
    <property type="term" value="F:magnesium ion binding"/>
    <property type="evidence" value="ECO:0007669"/>
    <property type="project" value="UniProtKB-UniRule"/>
</dbReference>
<dbReference type="GO" id="GO:0000820">
    <property type="term" value="P:regulation of glutamine family amino acid metabolic process"/>
    <property type="evidence" value="ECO:0007669"/>
    <property type="project" value="UniProtKB-UniRule"/>
</dbReference>
<dbReference type="CDD" id="cd05401">
    <property type="entry name" value="NT_GlnE_GlnD_like"/>
    <property type="match status" value="2"/>
</dbReference>
<dbReference type="FunFam" id="1.10.4050.10:FF:000001">
    <property type="entry name" value="Bifunctional glutamine synthetase adenylyltransferase/adenylyl-removing enzyme"/>
    <property type="match status" value="1"/>
</dbReference>
<dbReference type="FunFam" id="1.20.120.1510:FF:000001">
    <property type="entry name" value="Bifunctional glutamine synthetase adenylyltransferase/adenylyl-removing enzyme"/>
    <property type="match status" value="1"/>
</dbReference>
<dbReference type="FunFam" id="1.20.120.330:FF:000005">
    <property type="entry name" value="Bifunctional glutamine synthetase adenylyltransferase/adenylyl-removing enzyme"/>
    <property type="match status" value="1"/>
</dbReference>
<dbReference type="FunFam" id="1.20.120.330:FF:000008">
    <property type="entry name" value="Bifunctional glutamine synthetase adenylyltransferase/adenylyl-removing enzyme"/>
    <property type="match status" value="1"/>
</dbReference>
<dbReference type="FunFam" id="3.30.460.10:FF:000009">
    <property type="entry name" value="Bifunctional glutamine synthetase adenylyltransferase/adenylyl-removing enzyme"/>
    <property type="match status" value="1"/>
</dbReference>
<dbReference type="FunFam" id="3.30.460.10:FF:000014">
    <property type="entry name" value="Bifunctional glutamine synthetase adenylyltransferase/adenylyl-removing enzyme"/>
    <property type="match status" value="1"/>
</dbReference>
<dbReference type="Gene3D" id="1.20.120.1510">
    <property type="match status" value="1"/>
</dbReference>
<dbReference type="Gene3D" id="3.30.460.10">
    <property type="entry name" value="Beta Polymerase, domain 2"/>
    <property type="match status" value="2"/>
</dbReference>
<dbReference type="Gene3D" id="1.10.4050.10">
    <property type="entry name" value="Glutamine synthase adenylyltransferase GlnE"/>
    <property type="match status" value="1"/>
</dbReference>
<dbReference type="Gene3D" id="1.20.120.330">
    <property type="entry name" value="Nucleotidyltransferases domain 2"/>
    <property type="match status" value="2"/>
</dbReference>
<dbReference type="HAMAP" id="MF_00802">
    <property type="entry name" value="GlnE"/>
    <property type="match status" value="1"/>
</dbReference>
<dbReference type="InterPro" id="IPR023057">
    <property type="entry name" value="GlnE"/>
</dbReference>
<dbReference type="InterPro" id="IPR005190">
    <property type="entry name" value="GlnE_rpt_dom"/>
</dbReference>
<dbReference type="InterPro" id="IPR043519">
    <property type="entry name" value="NT_sf"/>
</dbReference>
<dbReference type="InterPro" id="IPR013546">
    <property type="entry name" value="PII_UdlTrfase/GS_AdlTrfase"/>
</dbReference>
<dbReference type="NCBIfam" id="NF008292">
    <property type="entry name" value="PRK11072.1"/>
    <property type="match status" value="1"/>
</dbReference>
<dbReference type="PANTHER" id="PTHR30621:SF0">
    <property type="entry name" value="BIFUNCTIONAL GLUTAMINE SYNTHETASE ADENYLYLTRANSFERASE_ADENYLYL-REMOVING ENZYME"/>
    <property type="match status" value="1"/>
</dbReference>
<dbReference type="PANTHER" id="PTHR30621">
    <property type="entry name" value="GLUTAMINE SYNTHETASE ADENYLYLTRANSFERASE"/>
    <property type="match status" value="1"/>
</dbReference>
<dbReference type="Pfam" id="PF08335">
    <property type="entry name" value="GlnD_UR_UTase"/>
    <property type="match status" value="2"/>
</dbReference>
<dbReference type="Pfam" id="PF03710">
    <property type="entry name" value="GlnE"/>
    <property type="match status" value="2"/>
</dbReference>
<dbReference type="SUPFAM" id="SSF81301">
    <property type="entry name" value="Nucleotidyltransferase"/>
    <property type="match status" value="2"/>
</dbReference>
<dbReference type="SUPFAM" id="SSF81593">
    <property type="entry name" value="Nucleotidyltransferase substrate binding subunit/domain"/>
    <property type="match status" value="2"/>
</dbReference>
<sequence length="946" mass="107945">MKPLSSPLQQHWQTVVERLPEILAEATLSVQAKSVLTFSDFVQDSVIAHPEWLTELESAPPQADEWRHYAAWLQDALAQVTDEAALMRELRVFRRRIMVRIAWAQALSLVEEENILQQLSHLAETLIVAARDWLYDACCREWGTPCNHDGVPQPLLILGMGKLGGGELNFSSDIDLIFAWPEHGSTRGGRRELDNAQFFTRMGQRLIKVLDQPTMDGFVYRVDMRLRPFGDSGPLVLSFAALEDYYQEQGRDWERYAMVKARIMGAADSAYVDELRAMLRPFVFRRYIDFSVIQSLRNMKGMIAREVRRRGLKDNIKLGAGGIREIEFIVQVFQLIRGGREPSLQSRSLLPTLSAIDALHLLPENDAGQLRAAYLFLRRLENLLQSINDEQTQTLPGDELNRARLAWGMRTDDWSQLTDILAAHMANVRRVFNELIGDDETDTQEDTLSEHWRELWQDALQEDDTTPVLAHLSDDDRGRVLALIADFRKELDKRTIGPRGRQVLDHLMPHLLSDVCSREDASVPLSRITPLLVGIVTRTTYLELLSEFPGALKHLISLCAASPMVASQLARYPLLLDELLDPNTLYQPTATDAYRDELRQYLLRVPEDDEEQQLEALRQFKQTQLLRIAAADIAGTLPVMKVSDHLTWLAEAIIDAVVQQAWGQMVARYGQPTHLAERTGRGFAVVGYGKLGGWELGYSSDLDLIFLHDCPMDVMTDGEREIDGRQFYLRLAQRIMHLFSTRTSSGILYEVDARLRPSGAAGMLVTSAEAFADYQKNEAWTWEHQALVRARVVYGDPQLTSQFDAVRRDIMTLAREGKTLQTEVREMREKMRAHLGNKHRDRFDIKADEGGITDIEFITQYLVLRYAHEKPKLTRWSDNVRILELLAQNDIMDEQEAHALTLAYTTLRDELHHLALQELPGHVAQECFSKERALVRASWQKWLVAG</sequence>
<gene>
    <name evidence="1" type="primary">glnE</name>
    <name type="ordered locus">CKO_04439</name>
</gene>